<keyword id="KW-0012">Acyltransferase</keyword>
<keyword id="KW-0576">Peroxisome</keyword>
<keyword id="KW-1185">Reference proteome</keyword>
<keyword id="KW-0808">Transferase</keyword>
<keyword id="KW-0843">Virulence</keyword>
<evidence type="ECO:0000250" key="1">
    <source>
        <dbReference type="UniProtKB" id="Q4WF55"/>
    </source>
</evidence>
<evidence type="ECO:0000269" key="2">
    <source>
    </source>
</evidence>
<evidence type="ECO:0000303" key="3">
    <source>
    </source>
</evidence>
<evidence type="ECO:0000305" key="4"/>
<evidence type="ECO:0000305" key="5">
    <source>
    </source>
</evidence>
<accession>J4W0D1</accession>
<comment type="function">
    <text evidence="1 2">Hydroxyornithine transacylase; part of the gene cluster that mediates the biosynthesis of at least 11 siderophores, including beauverichelin A, dimerumic acid (DA), Na-dimethyl coprogen (NADC), eleutherazine B, ferricrocin (FC), fusarinine A, fusarinine C (FsC), metachelin A, mevalonolactone, rhodotorulic acid (RA) and tenellin (PubMed:39109629). This cocktail of siderophores for iron metabolism is essential for virulence, and more specifically for the fungal virulence in penetrating through the host cuticle (PubMed:39109629). Siderophore synthesis is also involved in conidial germination under iron-deficient conditions (PubMed:39109629). For biosynthesis of fusarinine C, the transacylase SIDF transfers anhydromevalonyl to N(5)-hydroxyornithine. The required anhydromevalonyl-CoA moiety is derived from mevalonate by CoA ligation and dehydration catalyzed by SIDI and sidH respectively (By similarity).</text>
</comment>
<comment type="pathway">
    <text evidence="2">Siderophore biosynthesis.</text>
</comment>
<comment type="subcellular location">
    <subcellularLocation>
        <location evidence="2">Peroxisome</location>
    </subcellularLocation>
    <text evidence="2">Targeted to peroxisomes via its PTS1-type peroxisomal targeting signal.</text>
</comment>
<comment type="disruption phenotype">
    <text evidence="2">Leads to increased sensitivity to oxidative stress and iron-starvation, reduced conidial germination as well as reduced virulence (PubMed:39109629). Impairs the production of the 6 siderophores beauverichelin A, dimerumic acid (DA), Na-dimethyl coprogen (NADC), fusarinine A, fusarinine C (FsC), rhodotorulic acid (RA) and tenellin; but increases the production of mevalonolactone and eleutherazine B (PubMed:39109629).</text>
</comment>
<comment type="similarity">
    <text evidence="4">Belongs to the lysine N-acyltransferase mbtK family.</text>
</comment>
<organism>
    <name type="scientific">Beauveria bassiana (strain ARSEF 2860)</name>
    <name type="common">White muscardine disease fungus</name>
    <name type="synonym">Tritirachium shiotae</name>
    <dbReference type="NCBI Taxonomy" id="655819"/>
    <lineage>
        <taxon>Eukaryota</taxon>
        <taxon>Fungi</taxon>
        <taxon>Dikarya</taxon>
        <taxon>Ascomycota</taxon>
        <taxon>Pezizomycotina</taxon>
        <taxon>Sordariomycetes</taxon>
        <taxon>Hypocreomycetidae</taxon>
        <taxon>Hypocreales</taxon>
        <taxon>Cordycipitaceae</taxon>
        <taxon>Beauveria</taxon>
    </lineage>
</organism>
<feature type="chain" id="PRO_0000461397" description="N(5)-hydroxyornithine:cis-anhydromevalonyl coenzyme A-N(5)-transacylase SIDF">
    <location>
        <begin position="1"/>
        <end position="455"/>
    </location>
</feature>
<feature type="short sequence motif" description="PTS1-type peroxisomal targeting signal" evidence="1">
    <location>
        <begin position="453"/>
        <end position="455"/>
    </location>
</feature>
<protein>
    <recommendedName>
        <fullName evidence="3">N(5)-hydroxyornithine:cis-anhydromevalonyl coenzyme A-N(5)-transacylase SIDF</fullName>
        <shortName evidence="3">Hydroxyornithine transacylase SIDF</shortName>
        <ecNumber evidence="5">2.3.1.-</ecNumber>
    </recommendedName>
    <alternativeName>
        <fullName evidence="3">Siderophore biosynthesis cluster protein F</fullName>
    </alternativeName>
</protein>
<proteinExistence type="inferred from homology"/>
<sequence length="455" mass="50992">MAGIIDLASLAPTDTVLKLPHPYLTEYTVQRSDDKLFQLHPKEGSTVQPLPFALHAPHVRFSAPADLKSSELPASANNSLWARSRRSPFSDVRWESDAAAPTLAQAWLLLYVLFTVRPGMELVRLQLSGPGADVLSQQLREVLLGIAHPPPPPKSQAAAPEQATTETSSTVVVLRSTFWQGAGSPFGPRPVWCPDASPSSLPASTPLSQFPTTPLQHTITVASAGDPQDPDRYQQSLHPIRPAKPAPGAVIYSRWVPHLKETFSMVSVDYTDAEHLRLFHEWQNDPRVSQGWNETGTLEQHREYLRKIHEDPHQVALLAKWDDAYFAYFEIYWAKEDRLGGYYDAQDYDRGRHSLVGDVKFRGPHRVTAWWSSLMHYLFLDDPRTMWVVGEPKDTNAIPVMYDLIHGFGLEKFVDLPHKRSALVRCPRVRFFQLCPLGAQEKAVGGVNIGLVPKL</sequence>
<gene>
    <name evidence="3" type="primary">SIDF</name>
    <name type="ORF">BBA_06995</name>
</gene>
<reference key="1">
    <citation type="journal article" date="2012" name="Sci. Rep.">
        <title>Genomic perspectives on the evolution of fungal entomopathogenicity in Beauveria bassiana.</title>
        <authorList>
            <person name="Xiao G."/>
            <person name="Ying S.-H."/>
            <person name="Zheng P."/>
            <person name="Wang Z.-L."/>
            <person name="Zhang S."/>
            <person name="Xie X.-Q."/>
            <person name="Shang Y."/>
            <person name="St Leger R.J."/>
            <person name="Zhao G.-P."/>
            <person name="Wang C."/>
            <person name="Feng M.-G."/>
        </authorList>
    </citation>
    <scope>NUCLEOTIDE SEQUENCE [LARGE SCALE GENOMIC DNA]</scope>
    <source>
        <strain>ARSEF 2860</strain>
    </source>
</reference>
<reference key="2">
    <citation type="journal article" date="2024" name="J. Agric. Food Chem.">
        <title>Unlocking the siderophore biosynthesis pathway and its biological functions in the fungal insect pathogen Beauveria bassiana.</title>
        <authorList>
            <person name="Sun T.F."/>
            <person name="Ge Z.W."/>
            <person name="Xu H.R."/>
            <person name="Zhang H."/>
            <person name="Huang S.S."/>
            <person name="Feng M.G."/>
            <person name="Ying S.H."/>
        </authorList>
    </citation>
    <scope>FUNCTION</scope>
    <scope>DISRUPTION PHENOTYPE</scope>
    <scope>SUBCELLULAR LOCATION</scope>
    <scope>PATHWAY</scope>
</reference>
<dbReference type="EC" id="2.3.1.-" evidence="5"/>
<dbReference type="EMBL" id="JH725171">
    <property type="protein sequence ID" value="EJP63990.1"/>
    <property type="molecule type" value="Genomic_DNA"/>
</dbReference>
<dbReference type="RefSeq" id="XP_008600314.1">
    <property type="nucleotide sequence ID" value="XM_008602092.1"/>
</dbReference>
<dbReference type="SMR" id="J4W0D1"/>
<dbReference type="STRING" id="655819.J4W0D1"/>
<dbReference type="GeneID" id="19890007"/>
<dbReference type="HOGENOM" id="CLU_039848_1_0_1"/>
<dbReference type="InParanoid" id="J4W0D1"/>
<dbReference type="OrthoDB" id="3456at474943"/>
<dbReference type="Proteomes" id="UP000002762">
    <property type="component" value="Unassembled WGS sequence"/>
</dbReference>
<dbReference type="GO" id="GO:0005777">
    <property type="term" value="C:peroxisome"/>
    <property type="evidence" value="ECO:0007669"/>
    <property type="project" value="UniProtKB-SubCell"/>
</dbReference>
<dbReference type="GO" id="GO:0016410">
    <property type="term" value="F:N-acyltransferase activity"/>
    <property type="evidence" value="ECO:0007669"/>
    <property type="project" value="TreeGrafter"/>
</dbReference>
<dbReference type="GO" id="GO:0019290">
    <property type="term" value="P:siderophore biosynthetic process"/>
    <property type="evidence" value="ECO:0007669"/>
    <property type="project" value="InterPro"/>
</dbReference>
<dbReference type="Gene3D" id="3.40.630.30">
    <property type="match status" value="1"/>
</dbReference>
<dbReference type="InterPro" id="IPR016181">
    <property type="entry name" value="Acyl_CoA_acyltransferase"/>
</dbReference>
<dbReference type="InterPro" id="IPR019432">
    <property type="entry name" value="Acyltransferase_MbtK/IucB-like"/>
</dbReference>
<dbReference type="PANTHER" id="PTHR31438:SF7">
    <property type="entry name" value="ACYLTRANSFERASE MBTK_IUCB-LIKE CONSERVED DOMAIN-CONTAINING PROTEIN"/>
    <property type="match status" value="1"/>
</dbReference>
<dbReference type="PANTHER" id="PTHR31438">
    <property type="entry name" value="LYSINE N-ACYLTRANSFERASE C17G9.06C-RELATED"/>
    <property type="match status" value="1"/>
</dbReference>
<dbReference type="Pfam" id="PF13523">
    <property type="entry name" value="Acetyltransf_8"/>
    <property type="match status" value="1"/>
</dbReference>
<dbReference type="SMART" id="SM01006">
    <property type="entry name" value="AlcB"/>
    <property type="match status" value="1"/>
</dbReference>
<dbReference type="SUPFAM" id="SSF55729">
    <property type="entry name" value="Acyl-CoA N-acyltransferases (Nat)"/>
    <property type="match status" value="1"/>
</dbReference>
<name>SIDF_BEAB2</name>